<organism>
    <name type="scientific">Homo sapiens</name>
    <name type="common">Human</name>
    <dbReference type="NCBI Taxonomy" id="9606"/>
    <lineage>
        <taxon>Eukaryota</taxon>
        <taxon>Metazoa</taxon>
        <taxon>Chordata</taxon>
        <taxon>Craniata</taxon>
        <taxon>Vertebrata</taxon>
        <taxon>Euteleostomi</taxon>
        <taxon>Mammalia</taxon>
        <taxon>Eutheria</taxon>
        <taxon>Euarchontoglires</taxon>
        <taxon>Primates</taxon>
        <taxon>Haplorrhini</taxon>
        <taxon>Catarrhini</taxon>
        <taxon>Hominidae</taxon>
        <taxon>Homo</taxon>
    </lineage>
</organism>
<keyword id="KW-0002">3D-structure</keyword>
<keyword id="KW-0007">Acetylation</keyword>
<keyword id="KW-0010">Activator</keyword>
<keyword id="KW-0025">Alternative splicing</keyword>
<keyword id="KW-0903">Direct protein sequencing</keyword>
<keyword id="KW-1017">Isopeptide bond</keyword>
<keyword id="KW-0507">mRNA processing</keyword>
<keyword id="KW-0508">mRNA splicing</keyword>
<keyword id="KW-0539">Nucleus</keyword>
<keyword id="KW-0597">Phosphoprotein</keyword>
<keyword id="KW-1267">Proteomics identification</keyword>
<keyword id="KW-1185">Reference proteome</keyword>
<keyword id="KW-0677">Repeat</keyword>
<keyword id="KW-0678">Repressor</keyword>
<keyword id="KW-0694">RNA-binding</keyword>
<keyword id="KW-0832">Ubl conjugation</keyword>
<feature type="chain" id="PRO_0000081737" description="Polypyrimidine tract-binding protein 1">
    <location>
        <begin position="1"/>
        <end position="557"/>
    </location>
</feature>
<feature type="domain" description="RRM 1" evidence="1">
    <location>
        <begin position="59"/>
        <end position="143"/>
    </location>
</feature>
<feature type="domain" description="RRM 2" evidence="1">
    <location>
        <begin position="184"/>
        <end position="260"/>
    </location>
</feature>
<feature type="domain" description="RRM 3" evidence="1">
    <location>
        <begin position="363"/>
        <end position="437"/>
    </location>
</feature>
<feature type="domain" description="RRM 4" evidence="1">
    <location>
        <begin position="480"/>
        <end position="555"/>
    </location>
</feature>
<feature type="modified residue" description="N-acetylmethionine" evidence="13 16 19 20">
    <location>
        <position position="1"/>
    </location>
</feature>
<feature type="modified residue" description="Phosphoserine" evidence="15 21">
    <location>
        <position position="16"/>
    </location>
</feature>
<feature type="modified residue" description="Phosphotyrosine" evidence="21">
    <location>
        <position position="127"/>
    </location>
</feature>
<feature type="modified residue" description="Phosphothreonine" evidence="17">
    <location>
        <position position="138"/>
    </location>
</feature>
<feature type="modified residue" description="Phosphoserine" evidence="15 17 18 21">
    <location>
        <position position="141"/>
    </location>
</feature>
<feature type="modified residue" description="Phosphoserine" evidence="14 18 21">
    <location>
        <position position="459"/>
    </location>
</feature>
<feature type="cross-link" description="Glycyl lysine isopeptide (Lys-Gly) (interchain with G-Cter in SUMO2)" evidence="22">
    <location>
        <position position="65"/>
    </location>
</feature>
<feature type="cross-link" description="Glycyl lysine isopeptide (Lys-Gly) (interchain with G-Cter in SUMO2)" evidence="22">
    <location>
        <position position="218"/>
    </location>
</feature>
<feature type="splice variant" id="VSP_061652" description="In isoform 2.">
    <location>
        <begin position="298"/>
        <end position="323"/>
    </location>
</feature>
<feature type="splice variant" id="VSP_061653" description="In isoform 3.">
    <original>GAPGIISA</original>
    <variation>A</variation>
    <location>
        <begin position="298"/>
        <end position="305"/>
    </location>
</feature>
<feature type="strand" evidence="33">
    <location>
        <begin position="49"/>
        <end position="51"/>
    </location>
</feature>
<feature type="strand" evidence="30">
    <location>
        <begin position="53"/>
        <end position="55"/>
    </location>
</feature>
<feature type="strand" evidence="34">
    <location>
        <begin position="59"/>
        <end position="65"/>
    </location>
</feature>
<feature type="helix" evidence="34">
    <location>
        <begin position="72"/>
        <end position="79"/>
    </location>
</feature>
<feature type="helix" evidence="34">
    <location>
        <begin position="80"/>
        <end position="82"/>
    </location>
</feature>
<feature type="strand" evidence="34">
    <location>
        <begin position="85"/>
        <end position="91"/>
    </location>
</feature>
<feature type="helix" evidence="34">
    <location>
        <begin position="92"/>
        <end position="94"/>
    </location>
</feature>
<feature type="strand" evidence="34">
    <location>
        <begin position="96"/>
        <end position="102"/>
    </location>
</feature>
<feature type="helix" evidence="34">
    <location>
        <begin position="104"/>
        <end position="116"/>
    </location>
</feature>
<feature type="strand" evidence="33">
    <location>
        <begin position="122"/>
        <end position="124"/>
    </location>
</feature>
<feature type="strand" evidence="34">
    <location>
        <begin position="127"/>
        <end position="130"/>
    </location>
</feature>
<feature type="strand" evidence="24">
    <location>
        <begin position="132"/>
        <end position="135"/>
    </location>
</feature>
<feature type="turn" evidence="26">
    <location>
        <begin position="142"/>
        <end position="145"/>
    </location>
</feature>
<feature type="strand" evidence="31">
    <location>
        <begin position="182"/>
        <end position="190"/>
    </location>
</feature>
<feature type="helix" evidence="31">
    <location>
        <begin position="197"/>
        <end position="204"/>
    </location>
</feature>
<feature type="helix" evidence="32">
    <location>
        <begin position="205"/>
        <end position="207"/>
    </location>
</feature>
<feature type="strand" evidence="31">
    <location>
        <begin position="210"/>
        <end position="218"/>
    </location>
</feature>
<feature type="strand" evidence="31">
    <location>
        <begin position="221"/>
        <end position="229"/>
    </location>
</feature>
<feature type="helix" evidence="31">
    <location>
        <begin position="231"/>
        <end position="241"/>
    </location>
</feature>
<feature type="strand" evidence="31">
    <location>
        <begin position="245"/>
        <end position="247"/>
    </location>
</feature>
<feature type="strand" evidence="31">
    <location>
        <begin position="250"/>
        <end position="257"/>
    </location>
</feature>
<feature type="strand" evidence="25">
    <location>
        <begin position="259"/>
        <end position="262"/>
    </location>
</feature>
<feature type="strand" evidence="31">
    <location>
        <begin position="269"/>
        <end position="274"/>
    </location>
</feature>
<feature type="turn" evidence="27">
    <location>
        <begin position="289"/>
        <end position="291"/>
    </location>
</feature>
<feature type="turn" evidence="27">
    <location>
        <begin position="294"/>
        <end position="296"/>
    </location>
</feature>
<feature type="helix" evidence="28">
    <location>
        <begin position="355"/>
        <end position="358"/>
    </location>
</feature>
<feature type="strand" evidence="23">
    <location>
        <begin position="365"/>
        <end position="368"/>
    </location>
</feature>
<feature type="strand" evidence="23">
    <location>
        <begin position="372"/>
        <end position="374"/>
    </location>
</feature>
<feature type="helix" evidence="23">
    <location>
        <begin position="377"/>
        <end position="385"/>
    </location>
</feature>
<feature type="strand" evidence="23">
    <location>
        <begin position="391"/>
        <end position="394"/>
    </location>
</feature>
<feature type="turn" evidence="29">
    <location>
        <begin position="397"/>
        <end position="399"/>
    </location>
</feature>
<feature type="strand" evidence="23">
    <location>
        <begin position="404"/>
        <end position="406"/>
    </location>
</feature>
<feature type="turn" evidence="23">
    <location>
        <begin position="408"/>
        <end position="410"/>
    </location>
</feature>
<feature type="helix" evidence="23">
    <location>
        <begin position="411"/>
        <end position="420"/>
    </location>
</feature>
<feature type="strand" evidence="28">
    <location>
        <begin position="426"/>
        <end position="429"/>
    </location>
</feature>
<feature type="strand" evidence="23">
    <location>
        <begin position="431"/>
        <end position="434"/>
    </location>
</feature>
<feature type="strand" evidence="23">
    <location>
        <begin position="443"/>
        <end position="451"/>
    </location>
</feature>
<feature type="strand" evidence="23">
    <location>
        <begin position="453"/>
        <end position="457"/>
    </location>
</feature>
<feature type="strand" evidence="23">
    <location>
        <begin position="463"/>
        <end position="466"/>
    </location>
</feature>
<feature type="helix" evidence="28">
    <location>
        <begin position="470"/>
        <end position="472"/>
    </location>
</feature>
<feature type="strand" evidence="23">
    <location>
        <begin position="481"/>
        <end position="484"/>
    </location>
</feature>
<feature type="helix" evidence="23">
    <location>
        <begin position="493"/>
        <end position="502"/>
    </location>
</feature>
<feature type="strand" evidence="23">
    <location>
        <begin position="509"/>
        <end position="514"/>
    </location>
</feature>
<feature type="strand" evidence="23">
    <location>
        <begin position="520"/>
        <end position="523"/>
    </location>
</feature>
<feature type="helix" evidence="23">
    <location>
        <begin position="527"/>
        <end position="537"/>
    </location>
</feature>
<feature type="strand" evidence="28">
    <location>
        <begin position="541"/>
        <end position="545"/>
    </location>
</feature>
<feature type="strand" evidence="23">
    <location>
        <begin position="550"/>
        <end position="553"/>
    </location>
</feature>
<comment type="function">
    <text evidence="3 4 5 7 8 9 10 11">Plays a role in pre-mRNA splicing and in the regulation of alternative splicing events. Activates exon skipping of its own pre-mRNA during muscle cell differentiation. Binds to the polypyrimidine tract of introns. May promote RNA looping when bound to two separate polypyrimidine tracts in the same pre-mRNA. May promote the binding of U2 snRNP to pre-mRNA. Cooperates with RAVER1 to modulate switching between mutually exclusive exons during maturation of the TPM1 pre-mRNA. Represses the splicing of MAPT/Tau exon 10 (PubMed:15009664). Binds to polypyrimidine-rich controlling element (PCE) of CFTR and promotes exon skipping of CFTR exon 9, thereby antagonizing TIA1 and its role in exon inclusion of CFTR exon 9 (PubMed:14966131). Plays a role in the splicing of pyruvate kinase PKM by binding repressively to a polypyrimidine tract flanking PKM exon 9, inhibiting exon 9 inclusion and resulting in exon 10 inclusion and production of the PKM M2 isoform (PubMed:20010808). In case of infection by picornaviruses, binds to the viral internal ribosome entry site (IRES) and stimulates the IRES-mediated translation (PubMed:21518806).</text>
</comment>
<comment type="subunit">
    <text evidence="2 3 6 12">Monomer. Part of a ternary complex containing KHSRP, PTBP1, PTBP2 and HNRPH1. Interacts with RAVER1 and SFPQ. Interacts with IVNS1ABP (via BACK domain); the interaction is direct (PubMed:30538201).</text>
</comment>
<comment type="interaction">
    <interactant intactId="EBI-350540">
        <id>P26599</id>
    </interactant>
    <interactant intactId="EBI-349854">
        <id>P13569</id>
        <label>CFTR</label>
    </interactant>
    <organismsDiffer>false</organismsDiffer>
    <experiments>13</experiments>
</comment>
<comment type="interaction">
    <interactant intactId="EBI-350540">
        <id>P26599</id>
    </interactant>
    <interactant intactId="EBI-946095">
        <id>Q15365</id>
        <label>PCBP1</label>
    </interactant>
    <organismsDiffer>false</organismsDiffer>
    <experiments>2</experiments>
</comment>
<comment type="interaction">
    <interactant intactId="EBI-350540">
        <id>P26599</id>
    </interactant>
    <interactant intactId="EBI-945792">
        <id>Q96PU8</id>
        <label>QKI</label>
    </interactant>
    <organismsDiffer>false</organismsDiffer>
    <experiments>3</experiments>
</comment>
<comment type="interaction">
    <interactant intactId="EBI-350540">
        <id>P26599</id>
    </interactant>
    <interactant intactId="EBI-721525">
        <id>P98175</id>
        <label>RBM10</label>
    </interactant>
    <organismsDiffer>false</organismsDiffer>
    <experiments>4</experiments>
</comment>
<comment type="interaction">
    <interactant intactId="EBI-350540">
        <id>P26599</id>
    </interactant>
    <interactant intactId="EBI-355453">
        <id>P23246</id>
        <label>SFPQ</label>
    </interactant>
    <organismsDiffer>false</organismsDiffer>
    <experiments>2</experiments>
</comment>
<comment type="interaction">
    <interactant intactId="EBI-350540">
        <id>P26599</id>
    </interactant>
    <interactant intactId="EBI-607085">
        <id>P09012</id>
        <label>SNRPA</label>
    </interactant>
    <organismsDiffer>false</organismsDiffer>
    <experiments>7</experiments>
</comment>
<comment type="interaction">
    <interactant intactId="EBI-350540">
        <id>P26599</id>
    </interactant>
    <interactant intactId="EBI-1086317">
        <id>Q7ZYE9</id>
        <label>hnrnpab.L</label>
    </interactant>
    <organismsDiffer>true</organismsDiffer>
    <experiments>4</experiments>
</comment>
<comment type="interaction">
    <interactant intactId="EBI-350540">
        <id>P26599</id>
    </interactant>
    <interactant intactId="EBI-8826689">
        <id>PRO_0000037940</id>
        <dbReference type="UniProtKB" id="P29991"/>
    </interactant>
    <organismsDiffer>true</organismsDiffer>
    <experiments>5</experiments>
</comment>
<comment type="interaction">
    <interactant intactId="EBI-350540">
        <id>P26599</id>
    </interactant>
    <interactant intactId="EBI-8826747">
        <id>PRO_0000308465</id>
        <dbReference type="UniProtKB" id="P29991"/>
    </interactant>
    <organismsDiffer>true</organismsDiffer>
    <experiments>3</experiments>
</comment>
<comment type="interaction">
    <interactant intactId="EBI-16437588">
        <id>P26599-3</id>
    </interactant>
    <interactant intactId="EBI-721525">
        <id>P98175</id>
        <label>RBM10</label>
    </interactant>
    <organismsDiffer>false</organismsDiffer>
    <experiments>3</experiments>
</comment>
<comment type="interaction">
    <interactant intactId="EBI-16437588">
        <id>P26599-3</id>
    </interactant>
    <interactant intactId="EBI-372899">
        <id>Q13148</id>
        <label>TARDBP</label>
    </interactant>
    <organismsDiffer>false</organismsDiffer>
    <experiments>3</experiments>
</comment>
<comment type="subcellular location">
    <subcellularLocation>
        <location>Nucleus</location>
    </subcellularLocation>
</comment>
<comment type="alternative products">
    <event type="alternative splicing"/>
    <isoform>
        <id>P26599-3</id>
        <name>1</name>
        <sequence type="displayed"/>
    </isoform>
    <isoform>
        <id>P26599-1</id>
        <name>2</name>
        <sequence type="described" ref="VSP_061652"/>
    </isoform>
    <isoform>
        <id>P26599-2</id>
        <name>3</name>
        <name>PTB2</name>
        <sequence type="described" ref="VSP_061653"/>
    </isoform>
    <text>Additional isoforms seem to exist.</text>
</comment>
<comment type="online information" name="Atlas of Genetics and Cytogenetics in Oncology and Haematology">
    <link uri="https://atlasgeneticsoncology.org/gene/46504/PTBP1"/>
</comment>
<name>PTBP1_HUMAN</name>
<gene>
    <name type="primary">PTBP1</name>
    <name type="synonym">PTB</name>
</gene>
<dbReference type="EMBL" id="X60648">
    <property type="protein sequence ID" value="CAA43056.1"/>
    <property type="molecule type" value="mRNA"/>
</dbReference>
<dbReference type="EMBL" id="X62006">
    <property type="protein sequence ID" value="CAA43973.1"/>
    <property type="molecule type" value="mRNA"/>
</dbReference>
<dbReference type="EMBL" id="X65371">
    <property type="protein sequence ID" value="CAA46443.1"/>
    <property type="molecule type" value="mRNA"/>
</dbReference>
<dbReference type="EMBL" id="X65372">
    <property type="protein sequence ID" value="CAA46444.1"/>
    <property type="molecule type" value="mRNA"/>
</dbReference>
<dbReference type="EMBL" id="X66975">
    <property type="protein sequence ID" value="CAA47386.1"/>
    <property type="molecule type" value="mRNA"/>
</dbReference>
<dbReference type="EMBL" id="BT006819">
    <property type="protein sequence ID" value="AAP35465.1"/>
    <property type="molecule type" value="mRNA"/>
</dbReference>
<dbReference type="EMBL" id="AC006273">
    <property type="protein sequence ID" value="AAC99798.1"/>
    <property type="molecule type" value="Genomic_DNA"/>
</dbReference>
<dbReference type="EMBL" id="CH471242">
    <property type="protein sequence ID" value="EAW61154.1"/>
    <property type="molecule type" value="Genomic_DNA"/>
</dbReference>
<dbReference type="EMBL" id="BC002397">
    <property type="protein sequence ID" value="AAH02397.1"/>
    <property type="molecule type" value="mRNA"/>
</dbReference>
<dbReference type="EMBL" id="BC004383">
    <property type="protein sequence ID" value="AAH04383.1"/>
    <property type="molecule type" value="mRNA"/>
</dbReference>
<dbReference type="EMBL" id="BC013694">
    <property type="protein sequence ID" value="AAH13694.1"/>
    <property type="molecule type" value="mRNA"/>
</dbReference>
<dbReference type="CCDS" id="CCDS32859.1">
    <molecule id="P26599-1"/>
</dbReference>
<dbReference type="CCDS" id="CCDS42456.1">
    <molecule id="P26599-3"/>
</dbReference>
<dbReference type="CCDS" id="CCDS45892.1">
    <molecule id="P26599-2"/>
</dbReference>
<dbReference type="PIR" id="S23016">
    <property type="entry name" value="S23016"/>
</dbReference>
<dbReference type="RefSeq" id="NP_002810.1">
    <molecule id="P26599-3"/>
    <property type="nucleotide sequence ID" value="NM_002819.5"/>
</dbReference>
<dbReference type="RefSeq" id="NP_114367.1">
    <molecule id="P26599-2"/>
    <property type="nucleotide sequence ID" value="NM_031990.4"/>
</dbReference>
<dbReference type="RefSeq" id="NP_114368.1">
    <molecule id="P26599-1"/>
    <property type="nucleotide sequence ID" value="NM_031991.4"/>
</dbReference>
<dbReference type="PDB" id="1QM9">
    <property type="method" value="NMR"/>
    <property type="chains" value="A=361-557"/>
</dbReference>
<dbReference type="PDB" id="1SJQ">
    <property type="method" value="NMR"/>
    <property type="chains" value="A=55-147"/>
</dbReference>
<dbReference type="PDB" id="1SJR">
    <property type="method" value="NMR"/>
    <property type="chains" value="A=147-327"/>
</dbReference>
<dbReference type="PDB" id="2AD9">
    <property type="method" value="NMR"/>
    <property type="chains" value="A=49-146"/>
</dbReference>
<dbReference type="PDB" id="2ADB">
    <property type="method" value="NMR"/>
    <property type="chains" value="A=172-298"/>
</dbReference>
<dbReference type="PDB" id="2ADC">
    <property type="method" value="NMR"/>
    <property type="chains" value="A=350-557"/>
</dbReference>
<dbReference type="PDB" id="2EVZ">
    <property type="method" value="NMR"/>
    <property type="chains" value="A=350-557"/>
</dbReference>
<dbReference type="PDB" id="2N3O">
    <property type="method" value="NMR"/>
    <property type="chains" value="A=41-163"/>
</dbReference>
<dbReference type="PDB" id="3ZZY">
    <property type="method" value="X-ray"/>
    <property type="resolution" value="1.40 A"/>
    <property type="chains" value="A/B=156-285"/>
</dbReference>
<dbReference type="PDB" id="3ZZZ">
    <property type="method" value="X-ray"/>
    <property type="resolution" value="1.55 A"/>
    <property type="chains" value="A/B=156-285"/>
</dbReference>
<dbReference type="PDB" id="8BGF">
    <property type="method" value="NMR"/>
    <property type="chains" value="A=41-163"/>
</dbReference>
<dbReference type="PDB" id="8BWF">
    <property type="method" value="X-ray"/>
    <property type="resolution" value="2.90 A"/>
    <property type="chains" value="A/B/C/D/E/F/G/H/I/J/K/L/M/N/O/P=57-140"/>
</dbReference>
<dbReference type="PDBsum" id="1QM9"/>
<dbReference type="PDBsum" id="1SJQ"/>
<dbReference type="PDBsum" id="1SJR"/>
<dbReference type="PDBsum" id="2AD9"/>
<dbReference type="PDBsum" id="2ADB"/>
<dbReference type="PDBsum" id="2ADC"/>
<dbReference type="PDBsum" id="2EVZ"/>
<dbReference type="PDBsum" id="2N3O"/>
<dbReference type="PDBsum" id="3ZZY"/>
<dbReference type="PDBsum" id="3ZZZ"/>
<dbReference type="PDBsum" id="8BGF"/>
<dbReference type="PDBsum" id="8BWF"/>
<dbReference type="BMRB" id="P26599"/>
<dbReference type="SASBDB" id="P26599"/>
<dbReference type="SMR" id="P26599"/>
<dbReference type="BioGRID" id="111697">
    <property type="interactions" value="459"/>
</dbReference>
<dbReference type="CORUM" id="P26599"/>
<dbReference type="ELM" id="P26599"/>
<dbReference type="FunCoup" id="P26599">
    <property type="interactions" value="3177"/>
</dbReference>
<dbReference type="IntAct" id="P26599">
    <property type="interactions" value="107"/>
</dbReference>
<dbReference type="MINT" id="P26599"/>
<dbReference type="STRING" id="9606.ENSP00000349428"/>
<dbReference type="ChEMBL" id="CHEMBL1293230"/>
<dbReference type="GlyCosmos" id="P26599">
    <property type="glycosylation" value="6 sites, 1 glycan"/>
</dbReference>
<dbReference type="GlyGen" id="P26599">
    <property type="glycosylation" value="10 sites, 2 O-linked glycans (10 sites)"/>
</dbReference>
<dbReference type="iPTMnet" id="P26599"/>
<dbReference type="MetOSite" id="P26599"/>
<dbReference type="PhosphoSitePlus" id="P26599"/>
<dbReference type="SwissPalm" id="P26599"/>
<dbReference type="BioMuta" id="PTBP1"/>
<dbReference type="DMDM" id="131528"/>
<dbReference type="jPOST" id="P26599"/>
<dbReference type="MassIVE" id="P26599"/>
<dbReference type="PaxDb" id="9606-ENSP00000349428"/>
<dbReference type="PeptideAtlas" id="P26599"/>
<dbReference type="PRIDE" id="P26599"/>
<dbReference type="ProteomicsDB" id="54354">
    <molecule id="P26599-1"/>
</dbReference>
<dbReference type="ProteomicsDB" id="54355">
    <molecule id="P26599-2"/>
</dbReference>
<dbReference type="ProteomicsDB" id="54356">
    <molecule id="P26599-3"/>
</dbReference>
<dbReference type="Pumba" id="P26599"/>
<dbReference type="TopDownProteomics" id="P26599-1">
    <molecule id="P26599-1"/>
</dbReference>
<dbReference type="TopDownProteomics" id="P26599-2">
    <molecule id="P26599-2"/>
</dbReference>
<dbReference type="Antibodypedia" id="4613">
    <property type="antibodies" value="456 antibodies from 36 providers"/>
</dbReference>
<dbReference type="DNASU" id="5725"/>
<dbReference type="Ensembl" id="ENST00000349038.8">
    <molecule id="P26599-1"/>
    <property type="protein sequence ID" value="ENSP00000014112.5"/>
    <property type="gene ID" value="ENSG00000011304.22"/>
</dbReference>
<dbReference type="Ensembl" id="ENST00000356948.11">
    <molecule id="P26599-3"/>
    <property type="protein sequence ID" value="ENSP00000349428.4"/>
    <property type="gene ID" value="ENSG00000011304.22"/>
</dbReference>
<dbReference type="Ensembl" id="ENST00000394601.8">
    <molecule id="P26599-2"/>
    <property type="protein sequence ID" value="ENSP00000408096.1"/>
    <property type="gene ID" value="ENSG00000011304.22"/>
</dbReference>
<dbReference type="GeneID" id="5725"/>
<dbReference type="KEGG" id="hsa:5725"/>
<dbReference type="MANE-Select" id="ENST00000356948.11">
    <property type="protein sequence ID" value="ENSP00000349428.4"/>
    <property type="RefSeq nucleotide sequence ID" value="NM_002819.5"/>
    <property type="RefSeq protein sequence ID" value="NP_002810.1"/>
</dbReference>
<dbReference type="UCSC" id="uc002lpp.3">
    <molecule id="P26599-3"/>
    <property type="organism name" value="human"/>
</dbReference>
<dbReference type="AGR" id="HGNC:9583"/>
<dbReference type="CTD" id="5725"/>
<dbReference type="DisGeNET" id="5725"/>
<dbReference type="GeneCards" id="PTBP1"/>
<dbReference type="HGNC" id="HGNC:9583">
    <property type="gene designation" value="PTBP1"/>
</dbReference>
<dbReference type="HPA" id="ENSG00000011304">
    <property type="expression patterns" value="Low tissue specificity"/>
</dbReference>
<dbReference type="MIM" id="600693">
    <property type="type" value="gene"/>
</dbReference>
<dbReference type="neXtProt" id="NX_P26599"/>
<dbReference type="OpenTargets" id="ENSG00000011304"/>
<dbReference type="PharmGKB" id="PA33934"/>
<dbReference type="VEuPathDB" id="HostDB:ENSG00000011304"/>
<dbReference type="eggNOG" id="KOG1190">
    <property type="taxonomic scope" value="Eukaryota"/>
</dbReference>
<dbReference type="GeneTree" id="ENSGT01050000244924"/>
<dbReference type="HOGENOM" id="CLU_015171_7_1_1"/>
<dbReference type="InParanoid" id="P26599"/>
<dbReference type="OMA" id="NMIYPVT"/>
<dbReference type="OrthoDB" id="296632at2759"/>
<dbReference type="PAN-GO" id="P26599">
    <property type="GO annotations" value="4 GO annotations based on evolutionary models"/>
</dbReference>
<dbReference type="PhylomeDB" id="P26599"/>
<dbReference type="TreeFam" id="TF319824"/>
<dbReference type="PathwayCommons" id="P26599"/>
<dbReference type="Reactome" id="R-HSA-6803529">
    <property type="pathway name" value="FGFR2 alternative splicing"/>
</dbReference>
<dbReference type="Reactome" id="R-HSA-72163">
    <property type="pathway name" value="mRNA Splicing - Major Pathway"/>
</dbReference>
<dbReference type="Reactome" id="R-HSA-72203">
    <property type="pathway name" value="Processing of Capped Intron-Containing Pre-mRNA"/>
</dbReference>
<dbReference type="SignaLink" id="P26599"/>
<dbReference type="SIGNOR" id="P26599"/>
<dbReference type="BioGRID-ORCS" id="5725">
    <property type="hits" value="422 hits in 1180 CRISPR screens"/>
</dbReference>
<dbReference type="CD-CODE" id="1855AB2E">
    <property type="entry name" value="Synthetic Condensate 000027"/>
</dbReference>
<dbReference type="CD-CODE" id="1A926453">
    <property type="entry name" value="Synthetic Condensate 000307"/>
</dbReference>
<dbReference type="CD-CODE" id="22369FCF">
    <property type="entry name" value="Synthetic Condensate 000029"/>
</dbReference>
<dbReference type="CD-CODE" id="232F8A39">
    <property type="entry name" value="P-body"/>
</dbReference>
<dbReference type="CD-CODE" id="2F09078B">
    <property type="entry name" value="Synthetic Condensate 000024"/>
</dbReference>
<dbReference type="CD-CODE" id="31BA30E7">
    <property type="entry name" value="Synthetic Condensate 000023"/>
</dbReference>
<dbReference type="CD-CODE" id="33BF1E0E">
    <property type="entry name" value="Synthetic Condensate 000053"/>
</dbReference>
<dbReference type="CD-CODE" id="60F74988">
    <property type="entry name" value="Synthetic Condensate 000004"/>
</dbReference>
<dbReference type="CD-CODE" id="67BDA0FF">
    <property type="entry name" value="Synthetic Condensate 000032"/>
</dbReference>
<dbReference type="CD-CODE" id="804901D1">
    <property type="entry name" value="Nuclear speckle"/>
</dbReference>
<dbReference type="CD-CODE" id="91857CE7">
    <property type="entry name" value="Nucleolus"/>
</dbReference>
<dbReference type="CD-CODE" id="979E1F4B">
    <property type="entry name" value="Synthetic Condensate 000033"/>
</dbReference>
<dbReference type="CD-CODE" id="9D926880">
    <property type="entry name" value="Synthetic Condensate 000034"/>
</dbReference>
<dbReference type="CD-CODE" id="BD836276">
    <property type="entry name" value="Synthetic Condensate 000030"/>
</dbReference>
<dbReference type="CD-CODE" id="CEC93CD4">
    <property type="entry name" value="Synthetic Condensate 000048"/>
</dbReference>
<dbReference type="CD-CODE" id="DEE660B4">
    <property type="entry name" value="Stress granule"/>
</dbReference>
<dbReference type="CD-CODE" id="FF78ADB9">
    <property type="entry name" value="Synthetic Condensate 000050"/>
</dbReference>
<dbReference type="ChiTaRS" id="PTBP1">
    <property type="organism name" value="human"/>
</dbReference>
<dbReference type="EvolutionaryTrace" id="P26599"/>
<dbReference type="GeneWiki" id="PTBP1"/>
<dbReference type="GenomeRNAi" id="5725"/>
<dbReference type="Pharos" id="P26599">
    <property type="development level" value="Tbio"/>
</dbReference>
<dbReference type="PRO" id="PR:P26599"/>
<dbReference type="Proteomes" id="UP000005640">
    <property type="component" value="Chromosome 19"/>
</dbReference>
<dbReference type="RNAct" id="P26599">
    <property type="molecule type" value="protein"/>
</dbReference>
<dbReference type="Bgee" id="ENSG00000011304">
    <property type="expression patterns" value="Expressed in thymus and 212 other cell types or tissues"/>
</dbReference>
<dbReference type="ExpressionAtlas" id="P26599">
    <property type="expression patterns" value="baseline and differential"/>
</dbReference>
<dbReference type="GO" id="GO:0070062">
    <property type="term" value="C:extracellular exosome"/>
    <property type="evidence" value="ECO:0007005"/>
    <property type="project" value="UniProtKB"/>
</dbReference>
<dbReference type="GO" id="GO:0016020">
    <property type="term" value="C:membrane"/>
    <property type="evidence" value="ECO:0007005"/>
    <property type="project" value="UniProtKB"/>
</dbReference>
<dbReference type="GO" id="GO:0005730">
    <property type="term" value="C:nucleolus"/>
    <property type="evidence" value="ECO:0000304"/>
    <property type="project" value="ProtInc"/>
</dbReference>
<dbReference type="GO" id="GO:0005654">
    <property type="term" value="C:nucleoplasm"/>
    <property type="evidence" value="ECO:0000304"/>
    <property type="project" value="Reactome"/>
</dbReference>
<dbReference type="GO" id="GO:0005634">
    <property type="term" value="C:nucleus"/>
    <property type="evidence" value="ECO:0000318"/>
    <property type="project" value="GO_Central"/>
</dbReference>
<dbReference type="GO" id="GO:0003729">
    <property type="term" value="F:mRNA binding"/>
    <property type="evidence" value="ECO:0000318"/>
    <property type="project" value="GO_Central"/>
</dbReference>
<dbReference type="GO" id="GO:0008187">
    <property type="term" value="F:poly-pyrimidine tract binding"/>
    <property type="evidence" value="ECO:0000304"/>
    <property type="project" value="ProtInc"/>
</dbReference>
<dbReference type="GO" id="GO:0036002">
    <property type="term" value="F:pre-mRNA binding"/>
    <property type="evidence" value="ECO:0000314"/>
    <property type="project" value="UniProtKB"/>
</dbReference>
<dbReference type="GO" id="GO:0003723">
    <property type="term" value="F:RNA binding"/>
    <property type="evidence" value="ECO:0007005"/>
    <property type="project" value="UniProtKB"/>
</dbReference>
<dbReference type="GO" id="GO:0075522">
    <property type="term" value="P:IRES-dependent viral translational initiation"/>
    <property type="evidence" value="ECO:0000314"/>
    <property type="project" value="FlyBase"/>
</dbReference>
<dbReference type="GO" id="GO:0006397">
    <property type="term" value="P:mRNA processing"/>
    <property type="evidence" value="ECO:0000304"/>
    <property type="project" value="ProtInc"/>
</dbReference>
<dbReference type="GO" id="GO:0048025">
    <property type="term" value="P:negative regulation of mRNA splicing, via spliceosome"/>
    <property type="evidence" value="ECO:0000314"/>
    <property type="project" value="UniProtKB"/>
</dbReference>
<dbReference type="GO" id="GO:0051148">
    <property type="term" value="P:negative regulation of muscle cell differentiation"/>
    <property type="evidence" value="ECO:0000314"/>
    <property type="project" value="UniProtKB"/>
</dbReference>
<dbReference type="GO" id="GO:0045665">
    <property type="term" value="P:negative regulation of neuron differentiation"/>
    <property type="evidence" value="ECO:0007669"/>
    <property type="project" value="Ensembl"/>
</dbReference>
<dbReference type="GO" id="GO:0033119">
    <property type="term" value="P:negative regulation of RNA splicing"/>
    <property type="evidence" value="ECO:0000314"/>
    <property type="project" value="UniProtKB"/>
</dbReference>
<dbReference type="GO" id="GO:0022008">
    <property type="term" value="P:neurogenesis"/>
    <property type="evidence" value="ECO:0007669"/>
    <property type="project" value="Ensembl"/>
</dbReference>
<dbReference type="GO" id="GO:0070886">
    <property type="term" value="P:positive regulation of calcineurin-NFAT signaling cascade"/>
    <property type="evidence" value="ECO:0000315"/>
    <property type="project" value="BHF-UCL"/>
</dbReference>
<dbReference type="GO" id="GO:0045944">
    <property type="term" value="P:positive regulation of transcription by RNA polymerase II"/>
    <property type="evidence" value="ECO:0007669"/>
    <property type="project" value="Ensembl"/>
</dbReference>
<dbReference type="GO" id="GO:0000381">
    <property type="term" value="P:regulation of alternative mRNA splicing, via spliceosome"/>
    <property type="evidence" value="ECO:0000314"/>
    <property type="project" value="UniProtKB"/>
</dbReference>
<dbReference type="GO" id="GO:0045595">
    <property type="term" value="P:regulation of cell differentiation"/>
    <property type="evidence" value="ECO:0000318"/>
    <property type="project" value="GO_Central"/>
</dbReference>
<dbReference type="GO" id="GO:0043484">
    <property type="term" value="P:regulation of RNA splicing"/>
    <property type="evidence" value="ECO:0000318"/>
    <property type="project" value="GO_Central"/>
</dbReference>
<dbReference type="GO" id="GO:0008380">
    <property type="term" value="P:RNA splicing"/>
    <property type="evidence" value="ECO:0000304"/>
    <property type="project" value="ProtInc"/>
</dbReference>
<dbReference type="CDD" id="cd12777">
    <property type="entry name" value="RRM1_PTBP1"/>
    <property type="match status" value="1"/>
</dbReference>
<dbReference type="CDD" id="cd12782">
    <property type="entry name" value="RRM2_PTBP1"/>
    <property type="match status" value="1"/>
</dbReference>
<dbReference type="CDD" id="cd12695">
    <property type="entry name" value="RRM3_PTBP1"/>
    <property type="match status" value="1"/>
</dbReference>
<dbReference type="CDD" id="cd12701">
    <property type="entry name" value="RRM4_PTBP1"/>
    <property type="match status" value="1"/>
</dbReference>
<dbReference type="DisProt" id="DP01601"/>
<dbReference type="FunFam" id="3.30.70.330:FF:000036">
    <property type="entry name" value="polypyrimidine tract-binding protein 1 isoform X2"/>
    <property type="match status" value="1"/>
</dbReference>
<dbReference type="FunFam" id="3.30.70.330:FF:000162">
    <property type="entry name" value="polypyrimidine tract-binding protein 1 isoform X2"/>
    <property type="match status" value="1"/>
</dbReference>
<dbReference type="FunFam" id="3.30.70.330:FF:000018">
    <property type="entry name" value="Polypyrimidine tract-binding protein 2 isoform 1"/>
    <property type="match status" value="1"/>
</dbReference>
<dbReference type="FunFam" id="3.30.70.330:FF:000032">
    <property type="entry name" value="Polypyrimidine tract-binding protein 2 isoform 1"/>
    <property type="match status" value="1"/>
</dbReference>
<dbReference type="Gene3D" id="3.30.70.330">
    <property type="match status" value="4"/>
</dbReference>
<dbReference type="InterPro" id="IPR006536">
    <property type="entry name" value="HnRNP-L/PTB"/>
</dbReference>
<dbReference type="InterPro" id="IPR012677">
    <property type="entry name" value="Nucleotide-bd_a/b_plait_sf"/>
</dbReference>
<dbReference type="InterPro" id="IPR021790">
    <property type="entry name" value="PTBP1-like_RRM2"/>
</dbReference>
<dbReference type="InterPro" id="IPR035000">
    <property type="entry name" value="PTBP1_RRM1"/>
</dbReference>
<dbReference type="InterPro" id="IPR035001">
    <property type="entry name" value="PTBP1_RRM3"/>
</dbReference>
<dbReference type="InterPro" id="IPR035979">
    <property type="entry name" value="RBD_domain_sf"/>
</dbReference>
<dbReference type="InterPro" id="IPR000504">
    <property type="entry name" value="RRM_dom"/>
</dbReference>
<dbReference type="NCBIfam" id="TIGR01649">
    <property type="entry name" value="hnRNP-L_PTB"/>
    <property type="match status" value="1"/>
</dbReference>
<dbReference type="PANTHER" id="PTHR15592">
    <property type="entry name" value="MATRIN 3/NUCLEAR PROTEIN 220-RELATED"/>
    <property type="match status" value="1"/>
</dbReference>
<dbReference type="Pfam" id="PF00076">
    <property type="entry name" value="RRM_1"/>
    <property type="match status" value="1"/>
</dbReference>
<dbReference type="Pfam" id="PF13893">
    <property type="entry name" value="RRM_5"/>
    <property type="match status" value="2"/>
</dbReference>
<dbReference type="Pfam" id="PF11835">
    <property type="entry name" value="RRM_8"/>
    <property type="match status" value="1"/>
</dbReference>
<dbReference type="SMART" id="SM00360">
    <property type="entry name" value="RRM"/>
    <property type="match status" value="4"/>
</dbReference>
<dbReference type="SUPFAM" id="SSF54928">
    <property type="entry name" value="RNA-binding domain, RBD"/>
    <property type="match status" value="4"/>
</dbReference>
<dbReference type="PROSITE" id="PS50102">
    <property type="entry name" value="RRM"/>
    <property type="match status" value="4"/>
</dbReference>
<accession>P26599</accession>
<accession>Q9BUQ0</accession>
<sequence>MDGIVPDIAVGTKRGSDELFSTCVTNGPFIMSSNSASAANGNDSKKFKGDSRSAGVPSRVIHIRKLPIDVTEGEVISLGLPFGKVTNLLMLKGKNQAFIEMNTEEAANTMVNYYTSVTPVLRGQPIYIQFSNHKELKTDSSPNQARAQAALQAVNSVQSGNLALAASAAAVDAGMAMAGQSPVLRIIVENLFYPVTLDVLHQIFSKFGTVLKIITFTKNNQFQALLQYADPVSAQHAKLSLDGQNIYNACCTLRIDFSKLTSLNVKYNNDKSRDYTRPDLPSGDSQPSLDQTMAAAFGAPGIISASPYAGAGFPPTFAIPQAAGLSVPNVHGALAPLAIPSAAAAAAAAGRIAIPGLAGAGNSVLLVSNLNPERVTPQSLFILFGVYGDVQRVKILFNKKENALVQMADGNQAQLAMSHLNGHKLHGKPIRITLSKHQNVQLPREGQEDQGLTKDYGNSPLHRFKKPGSKNFQNIFPPSATLHLSNIPPSVSEEDLKVLFSSNGGVVKGFKFFQKDRKMALIQMGSVEEAVQALIDLHNHDLGENHHLRVSFSKSTI</sequence>
<reference key="1">
    <citation type="journal article" date="1991" name="Genes Dev.">
        <title>Characterization of cDNAs encoding the polypyrimidine tract-binding protein.</title>
        <authorList>
            <person name="Gil A."/>
            <person name="Sharp P.A."/>
            <person name="Jamison S.F."/>
            <person name="Garcia-Blanco M.A."/>
        </authorList>
    </citation>
    <scope>NUCLEOTIDE SEQUENCE [MRNA] (ISOFORM 2)</scope>
    <scope>PROTEIN SEQUENCE OF 123-130 AND 219-238</scope>
    <source>
        <tissue>Placenta</tissue>
    </source>
</reference>
<reference key="2">
    <citation type="journal article" date="1991" name="Genes Dev.">
        <title>Characterization and molecular cloning of polypyrimidine tract-binding protein: a component of a complex necessary for pre-mRNA splicing.</title>
        <authorList>
            <person name="Patton J.G."/>
            <person name="Mayer S.A."/>
            <person name="Tempst P."/>
            <person name="Nadal-Ginard B."/>
        </authorList>
    </citation>
    <scope>NUCLEOTIDE SEQUENCE [MRNA] (ISOFORMS 1; 2 AND 3)</scope>
</reference>
<reference key="3">
    <citation type="journal article" date="1992" name="Nucleic Acids Res.">
        <title>hnRNP I, the polypyrimidine tract-binding protein: distinct nuclear localization and association with hnRNAs.</title>
        <authorList>
            <person name="Ghetti A."/>
            <person name="Pinol-Roma S."/>
            <person name="Michael W."/>
            <person name="Morandi C."/>
            <person name="Dreyfuss G."/>
        </authorList>
    </citation>
    <scope>NUCLEOTIDE SEQUENCE [MRNA] (ISOFORM 1)</scope>
    <source>
        <tissue>Liver</tissue>
    </source>
</reference>
<reference key="4">
    <citation type="submission" date="2003-05" db="EMBL/GenBank/DDBJ databases">
        <title>Cloning of human full-length CDSs in BD Creator(TM) system donor vector.</title>
        <authorList>
            <person name="Kalnine N."/>
            <person name="Chen X."/>
            <person name="Rolfs A."/>
            <person name="Halleck A."/>
            <person name="Hines L."/>
            <person name="Eisenstein S."/>
            <person name="Koundinya M."/>
            <person name="Raphael J."/>
            <person name="Moreira D."/>
            <person name="Kelley T."/>
            <person name="LaBaer J."/>
            <person name="Lin Y."/>
            <person name="Phelan M."/>
            <person name="Farmer A."/>
        </authorList>
    </citation>
    <scope>NUCLEOTIDE SEQUENCE [LARGE SCALE MRNA] (ISOFORM 1)</scope>
</reference>
<reference key="5">
    <citation type="journal article" date="2004" name="Nature">
        <title>The DNA sequence and biology of human chromosome 19.</title>
        <authorList>
            <person name="Grimwood J."/>
            <person name="Gordon L.A."/>
            <person name="Olsen A.S."/>
            <person name="Terry A."/>
            <person name="Schmutz J."/>
            <person name="Lamerdin J.E."/>
            <person name="Hellsten U."/>
            <person name="Goodstein D."/>
            <person name="Couronne O."/>
            <person name="Tran-Gyamfi M."/>
            <person name="Aerts A."/>
            <person name="Altherr M."/>
            <person name="Ashworth L."/>
            <person name="Bajorek E."/>
            <person name="Black S."/>
            <person name="Branscomb E."/>
            <person name="Caenepeel S."/>
            <person name="Carrano A.V."/>
            <person name="Caoile C."/>
            <person name="Chan Y.M."/>
            <person name="Christensen M."/>
            <person name="Cleland C.A."/>
            <person name="Copeland A."/>
            <person name="Dalin E."/>
            <person name="Dehal P."/>
            <person name="Denys M."/>
            <person name="Detter J.C."/>
            <person name="Escobar J."/>
            <person name="Flowers D."/>
            <person name="Fotopulos D."/>
            <person name="Garcia C."/>
            <person name="Georgescu A.M."/>
            <person name="Glavina T."/>
            <person name="Gomez M."/>
            <person name="Gonzales E."/>
            <person name="Groza M."/>
            <person name="Hammon N."/>
            <person name="Hawkins T."/>
            <person name="Haydu L."/>
            <person name="Ho I."/>
            <person name="Huang W."/>
            <person name="Israni S."/>
            <person name="Jett J."/>
            <person name="Kadner K."/>
            <person name="Kimball H."/>
            <person name="Kobayashi A."/>
            <person name="Larionov V."/>
            <person name="Leem S.-H."/>
            <person name="Lopez F."/>
            <person name="Lou Y."/>
            <person name="Lowry S."/>
            <person name="Malfatti S."/>
            <person name="Martinez D."/>
            <person name="McCready P.M."/>
            <person name="Medina C."/>
            <person name="Morgan J."/>
            <person name="Nelson K."/>
            <person name="Nolan M."/>
            <person name="Ovcharenko I."/>
            <person name="Pitluck S."/>
            <person name="Pollard M."/>
            <person name="Popkie A.P."/>
            <person name="Predki P."/>
            <person name="Quan G."/>
            <person name="Ramirez L."/>
            <person name="Rash S."/>
            <person name="Retterer J."/>
            <person name="Rodriguez A."/>
            <person name="Rogers S."/>
            <person name="Salamov A."/>
            <person name="Salazar A."/>
            <person name="She X."/>
            <person name="Smith D."/>
            <person name="Slezak T."/>
            <person name="Solovyev V."/>
            <person name="Thayer N."/>
            <person name="Tice H."/>
            <person name="Tsai M."/>
            <person name="Ustaszewska A."/>
            <person name="Vo N."/>
            <person name="Wagner M."/>
            <person name="Wheeler J."/>
            <person name="Wu K."/>
            <person name="Xie G."/>
            <person name="Yang J."/>
            <person name="Dubchak I."/>
            <person name="Furey T.S."/>
            <person name="DeJong P."/>
            <person name="Dickson M."/>
            <person name="Gordon D."/>
            <person name="Eichler E.E."/>
            <person name="Pennacchio L.A."/>
            <person name="Richardson P."/>
            <person name="Stubbs L."/>
            <person name="Rokhsar D.S."/>
            <person name="Myers R.M."/>
            <person name="Rubin E.M."/>
            <person name="Lucas S.M."/>
        </authorList>
    </citation>
    <scope>NUCLEOTIDE SEQUENCE [LARGE SCALE GENOMIC DNA]</scope>
</reference>
<reference key="6">
    <citation type="submission" date="2005-07" db="EMBL/GenBank/DDBJ databases">
        <authorList>
            <person name="Mural R.J."/>
            <person name="Istrail S."/>
            <person name="Sutton G."/>
            <person name="Florea L."/>
            <person name="Halpern A.L."/>
            <person name="Mobarry C.M."/>
            <person name="Lippert R."/>
            <person name="Walenz B."/>
            <person name="Shatkay H."/>
            <person name="Dew I."/>
            <person name="Miller J.R."/>
            <person name="Flanigan M.J."/>
            <person name="Edwards N.J."/>
            <person name="Bolanos R."/>
            <person name="Fasulo D."/>
            <person name="Halldorsson B.V."/>
            <person name="Hannenhalli S."/>
            <person name="Turner R."/>
            <person name="Yooseph S."/>
            <person name="Lu F."/>
            <person name="Nusskern D.R."/>
            <person name="Shue B.C."/>
            <person name="Zheng X.H."/>
            <person name="Zhong F."/>
            <person name="Delcher A.L."/>
            <person name="Huson D.H."/>
            <person name="Kravitz S.A."/>
            <person name="Mouchard L."/>
            <person name="Reinert K."/>
            <person name="Remington K.A."/>
            <person name="Clark A.G."/>
            <person name="Waterman M.S."/>
            <person name="Eichler E.E."/>
            <person name="Adams M.D."/>
            <person name="Hunkapiller M.W."/>
            <person name="Myers E.W."/>
            <person name="Venter J.C."/>
        </authorList>
    </citation>
    <scope>NUCLEOTIDE SEQUENCE [LARGE SCALE GENOMIC DNA]</scope>
</reference>
<reference key="7">
    <citation type="journal article" date="2004" name="Genome Res.">
        <title>The status, quality, and expansion of the NIH full-length cDNA project: the Mammalian Gene Collection (MGC).</title>
        <authorList>
            <consortium name="The MGC Project Team"/>
        </authorList>
    </citation>
    <scope>NUCLEOTIDE SEQUENCE [LARGE SCALE MRNA] (ISOFORMS 1 AND 2)</scope>
    <source>
        <tissue>Lung</tissue>
        <tissue>Ovary</tissue>
        <tissue>Skin</tissue>
    </source>
</reference>
<reference key="8">
    <citation type="submission" date="2007-07" db="UniProtKB">
        <authorList>
            <person name="Bienvenut W.V."/>
            <person name="Heiserich L."/>
            <person name="Boulahbel H."/>
            <person name="Gottlieb E."/>
            <person name="Matallanas D."/>
            <person name="Cooper W.N."/>
            <person name="Boldt K."/>
            <person name="von Kriegsheim A.F."/>
            <person name="Kolch W."/>
        </authorList>
    </citation>
    <scope>PROTEIN SEQUENCE OF 1-13; 65-92; 123-134; 219-238; 352-374; 437-444; 455-463 AND 498-508</scope>
    <scope>ACETYLATION AT MET-1</scope>
    <scope>IDENTIFICATION BY MASS SPECTROMETRY</scope>
    <source>
        <tissue>Colon carcinoma</tissue>
        <tissue>Hepatoma</tissue>
        <tissue>Mammary carcinoma</tissue>
    </source>
</reference>
<reference key="9">
    <citation type="journal article" date="1992" name="Electrophoresis">
        <title>Microsequences of 145 proteins recorded in the two-dimensional gel protein database of normal human epidermal keratinocytes.</title>
        <authorList>
            <person name="Rasmussen H.H."/>
            <person name="van Damme J."/>
            <person name="Puype M."/>
            <person name="Gesser B."/>
            <person name="Celis J.E."/>
            <person name="Vandekerckhove J."/>
        </authorList>
    </citation>
    <scope>PROTEIN SEQUENCE OF 123-129; 425-431; 437-452 AND 455-463</scope>
    <source>
        <tissue>Keratinocyte</tissue>
    </source>
</reference>
<reference key="10">
    <citation type="journal article" date="2000" name="J. Cell. Biochem.">
        <title>Differential nuclear localization and nuclear matrix association of the splicing factors PSF and PTB.</title>
        <authorList>
            <person name="Meissner M."/>
            <person name="Dechat T."/>
            <person name="Gerner C."/>
            <person name="Grimm R."/>
            <person name="Foisner R."/>
            <person name="Sauermann G."/>
        </authorList>
    </citation>
    <scope>INTERACTION WITH SFPQ</scope>
</reference>
<reference key="11">
    <citation type="journal article" date="2000" name="Mol. Cell. Biol.">
        <title>Cooperative assembly of an hnRNP complex induced by a tissue-specific homolog of polypyrimidine tract binding protein.</title>
        <authorList>
            <person name="Markovtsov V."/>
            <person name="Nikolic J.M."/>
            <person name="Goldman J.A."/>
            <person name="Turck C.W."/>
            <person name="Chou M.-Y."/>
            <person name="Black D.L."/>
        </authorList>
    </citation>
    <scope>FUNCTION</scope>
    <scope>INTERACTION WITH HNRPH1; PTBP2 AND KHSRP</scope>
</reference>
<reference key="12">
    <citation type="journal article" date="2004" name="J. Neurochem.">
        <title>Tau exon 10, whose missplicing causes frontotemporal dementia, is regulated by an intricate interplay of cis elements and trans factors.</title>
        <authorList>
            <person name="Wang J."/>
            <person name="Gao Q.S."/>
            <person name="Wang Y."/>
            <person name="Lafyatis R."/>
            <person name="Stamm S."/>
            <person name="Andreadis A."/>
        </authorList>
    </citation>
    <scope>FUNCTION</scope>
</reference>
<reference key="13">
    <citation type="journal article" date="2004" name="J. Biol. Chem.">
        <title>An intronic polypyrimidine-rich element downstream of the donor site modulates cystic fibrosis transmembrane conductance regulator exon 9 alternative splicing.</title>
        <authorList>
            <person name="Zuccato E."/>
            <person name="Buratti E."/>
            <person name="Stuani C."/>
            <person name="Baralle F.E."/>
            <person name="Pagani F."/>
        </authorList>
    </citation>
    <scope>FUNCTION</scope>
</reference>
<reference key="14">
    <citation type="journal article" date="2005" name="Mol. Cell. Biol.">
        <title>Exon selection in alpha-tropomyosin mRNA is regulated by the antagonistic action of RBM4 and PTB.</title>
        <authorList>
            <person name="Lin J.C."/>
            <person name="Tarn W.Y."/>
        </authorList>
    </citation>
    <scope>FUNCTION</scope>
    <scope>RNA-BINDING</scope>
</reference>
<reference key="15">
    <citation type="journal article" date="2006" name="Cell">
        <title>Global, in vivo, and site-specific phosphorylation dynamics in signaling networks.</title>
        <authorList>
            <person name="Olsen J.V."/>
            <person name="Blagoev B."/>
            <person name="Gnad F."/>
            <person name="Macek B."/>
            <person name="Kumar C."/>
            <person name="Mortensen P."/>
            <person name="Mann M."/>
        </authorList>
    </citation>
    <scope>IDENTIFICATION BY MASS SPECTROMETRY [LARGE SCALE ANALYSIS]</scope>
    <source>
        <tissue>Cervix carcinoma</tissue>
    </source>
</reference>
<reference key="16">
    <citation type="journal article" date="2007" name="J. Proteome Res.">
        <title>Improved titanium dioxide enrichment of phosphopeptides from HeLa cells and high confident phosphopeptide identification by cross-validation of MS/MS and MS/MS/MS spectra.</title>
        <authorList>
            <person name="Yu L.R."/>
            <person name="Zhu Z."/>
            <person name="Chan K.C."/>
            <person name="Issaq H.J."/>
            <person name="Dimitrov D.S."/>
            <person name="Veenstra T.D."/>
        </authorList>
    </citation>
    <scope>PHOSPHORYLATION [LARGE SCALE ANALYSIS] AT SER-459</scope>
    <scope>IDENTIFICATION BY MASS SPECTROMETRY [LARGE SCALE ANALYSIS]</scope>
    <source>
        <tissue>Cervix carcinoma</tissue>
    </source>
</reference>
<reference key="17">
    <citation type="journal article" date="2008" name="Proc. Natl. Acad. Sci. U.S.A.">
        <title>A quantitative atlas of mitotic phosphorylation.</title>
        <authorList>
            <person name="Dephoure N."/>
            <person name="Zhou C."/>
            <person name="Villen J."/>
            <person name="Beausoleil S.A."/>
            <person name="Bakalarski C.E."/>
            <person name="Elledge S.J."/>
            <person name="Gygi S.P."/>
        </authorList>
    </citation>
    <scope>PHOSPHORYLATION [LARGE SCALE ANALYSIS] AT SER-16 AND SER-141</scope>
    <scope>IDENTIFICATION BY MASS SPECTROMETRY [LARGE SCALE ANALYSIS]</scope>
    <source>
        <tissue>Cervix carcinoma</tissue>
    </source>
</reference>
<reference key="18">
    <citation type="journal article" date="2009" name="Anal. Chem.">
        <title>Lys-N and trypsin cover complementary parts of the phosphoproteome in a refined SCX-based approach.</title>
        <authorList>
            <person name="Gauci S."/>
            <person name="Helbig A.O."/>
            <person name="Slijper M."/>
            <person name="Krijgsveld J."/>
            <person name="Heck A.J."/>
            <person name="Mohammed S."/>
        </authorList>
    </citation>
    <scope>ACETYLATION [LARGE SCALE ANALYSIS] AT MET-1</scope>
    <scope>IDENTIFICATION BY MASS SPECTROMETRY [LARGE SCALE ANALYSIS]</scope>
</reference>
<reference key="19">
    <citation type="journal article" date="2010" name="Nature">
        <title>HnRNP proteins controlled by c-Myc deregulate pyruvate kinase mRNA splicing in cancer.</title>
        <authorList>
            <person name="David C.J."/>
            <person name="Chen M."/>
            <person name="Assanah M."/>
            <person name="Canoll P."/>
            <person name="Manley J.L."/>
        </authorList>
    </citation>
    <scope>FUNCTION</scope>
</reference>
<reference key="20">
    <citation type="journal article" date="2010" name="Sci. Signal.">
        <title>Quantitative phosphoproteomics reveals widespread full phosphorylation site occupancy during mitosis.</title>
        <authorList>
            <person name="Olsen J.V."/>
            <person name="Vermeulen M."/>
            <person name="Santamaria A."/>
            <person name="Kumar C."/>
            <person name="Miller M.L."/>
            <person name="Jensen L.J."/>
            <person name="Gnad F."/>
            <person name="Cox J."/>
            <person name="Jensen T.S."/>
            <person name="Nigg E.A."/>
            <person name="Brunak S."/>
            <person name="Mann M."/>
        </authorList>
    </citation>
    <scope>PHOSPHORYLATION [LARGE SCALE ANALYSIS] AT THR-138 AND SER-141</scope>
    <scope>IDENTIFICATION BY MASS SPECTROMETRY [LARGE SCALE ANALYSIS]</scope>
    <source>
        <tissue>Cervix carcinoma</tissue>
    </source>
</reference>
<reference key="21">
    <citation type="journal article" date="2011" name="BMC Syst. Biol.">
        <title>Initial characterization of the human central proteome.</title>
        <authorList>
            <person name="Burkard T.R."/>
            <person name="Planyavsky M."/>
            <person name="Kaupe I."/>
            <person name="Breitwieser F.P."/>
            <person name="Buerckstuemmer T."/>
            <person name="Bennett K.L."/>
            <person name="Superti-Furga G."/>
            <person name="Colinge J."/>
        </authorList>
    </citation>
    <scope>IDENTIFICATION BY MASS SPECTROMETRY [LARGE SCALE ANALYSIS]</scope>
</reference>
<reference key="22">
    <citation type="journal article" date="2011" name="J. Cell Biol.">
        <title>RBM4 down-regulates PTB and antagonizes its activity in muscle cell-specific alternative splicing.</title>
        <authorList>
            <person name="Lin J.C."/>
            <person name="Tarn W.Y."/>
        </authorList>
    </citation>
    <scope>FUNCTION</scope>
</reference>
<reference key="23">
    <citation type="journal article" date="2011" name="RNA">
        <title>Activation of picornaviral IRESs by PTB shows differential dependence on each PTB RNA-binding domain.</title>
        <authorList>
            <person name="Kafasla P."/>
            <person name="Lin H."/>
            <person name="Curry S."/>
            <person name="Jackson R.J."/>
        </authorList>
    </citation>
    <scope>FUNCTION</scope>
</reference>
<reference key="24">
    <citation type="journal article" date="2011" name="Sci. Signal.">
        <title>System-wide temporal characterization of the proteome and phosphoproteome of human embryonic stem cell differentiation.</title>
        <authorList>
            <person name="Rigbolt K.T."/>
            <person name="Prokhorova T.A."/>
            <person name="Akimov V."/>
            <person name="Henningsen J."/>
            <person name="Johansen P.T."/>
            <person name="Kratchmarova I."/>
            <person name="Kassem M."/>
            <person name="Mann M."/>
            <person name="Olsen J.V."/>
            <person name="Blagoev B."/>
        </authorList>
    </citation>
    <scope>PHOSPHORYLATION [LARGE SCALE ANALYSIS] AT SER-141 AND SER-459</scope>
    <scope>IDENTIFICATION BY MASS SPECTROMETRY [LARGE SCALE ANALYSIS]</scope>
</reference>
<reference key="25">
    <citation type="journal article" date="2012" name="Mol. Cell. Proteomics">
        <title>Comparative large-scale characterisation of plant vs. mammal proteins reveals similar and idiosyncratic N-alpha acetylation features.</title>
        <authorList>
            <person name="Bienvenut W.V."/>
            <person name="Sumpton D."/>
            <person name="Martinez A."/>
            <person name="Lilla S."/>
            <person name="Espagne C."/>
            <person name="Meinnel T."/>
            <person name="Giglione C."/>
        </authorList>
    </citation>
    <scope>ACETYLATION [LARGE SCALE ANALYSIS] AT MET-1</scope>
    <scope>IDENTIFICATION BY MASS SPECTROMETRY [LARGE SCALE ANALYSIS]</scope>
</reference>
<reference key="26">
    <citation type="journal article" date="2012" name="Proc. Natl. Acad. Sci. U.S.A.">
        <title>N-terminal acetylome analyses and functional insights of the N-terminal acetyltransferase NatB.</title>
        <authorList>
            <person name="Van Damme P."/>
            <person name="Lasa M."/>
            <person name="Polevoda B."/>
            <person name="Gazquez C."/>
            <person name="Elosegui-Artola A."/>
            <person name="Kim D.S."/>
            <person name="De Juan-Pardo E."/>
            <person name="Demeyer K."/>
            <person name="Hole K."/>
            <person name="Larrea E."/>
            <person name="Timmerman E."/>
            <person name="Prieto J."/>
            <person name="Arnesen T."/>
            <person name="Sherman F."/>
            <person name="Gevaert K."/>
            <person name="Aldabe R."/>
        </authorList>
    </citation>
    <scope>ACETYLATION [LARGE SCALE ANALYSIS] AT MET-1</scope>
    <scope>IDENTIFICATION BY MASS SPECTROMETRY [LARGE SCALE ANALYSIS]</scope>
</reference>
<reference key="27">
    <citation type="journal article" date="2013" name="J. Proteome Res.">
        <title>Toward a comprehensive characterization of a human cancer cell phosphoproteome.</title>
        <authorList>
            <person name="Zhou H."/>
            <person name="Di Palma S."/>
            <person name="Preisinger C."/>
            <person name="Peng M."/>
            <person name="Polat A.N."/>
            <person name="Heck A.J."/>
            <person name="Mohammed S."/>
        </authorList>
    </citation>
    <scope>PHOSPHORYLATION [LARGE SCALE ANALYSIS] AT SER-16; TYR-127; SER-141 AND SER-459</scope>
    <scope>IDENTIFICATION BY MASS SPECTROMETRY [LARGE SCALE ANALYSIS]</scope>
    <source>
        <tissue>Cervix carcinoma</tissue>
        <tissue>Erythroleukemia</tissue>
    </source>
</reference>
<reference key="28">
    <citation type="journal article" date="2014" name="J. Proteomics">
        <title>An enzyme assisted RP-RPLC approach for in-depth analysis of human liver phosphoproteome.</title>
        <authorList>
            <person name="Bian Y."/>
            <person name="Song C."/>
            <person name="Cheng K."/>
            <person name="Dong M."/>
            <person name="Wang F."/>
            <person name="Huang J."/>
            <person name="Sun D."/>
            <person name="Wang L."/>
            <person name="Ye M."/>
            <person name="Zou H."/>
        </authorList>
    </citation>
    <scope>IDENTIFICATION BY MASS SPECTROMETRY [LARGE SCALE ANALYSIS]</scope>
    <source>
        <tissue>Liver</tissue>
    </source>
</reference>
<reference key="29">
    <citation type="journal article" date="2015" name="Proteomics">
        <title>N-terminome analysis of the human mitochondrial proteome.</title>
        <authorList>
            <person name="Vaca Jacome A.S."/>
            <person name="Rabilloud T."/>
            <person name="Schaeffer-Reiss C."/>
            <person name="Rompais M."/>
            <person name="Ayoub D."/>
            <person name="Lane L."/>
            <person name="Bairoch A."/>
            <person name="Van Dorsselaer A."/>
            <person name="Carapito C."/>
        </authorList>
    </citation>
    <scope>IDENTIFICATION BY MASS SPECTROMETRY [LARGE SCALE ANALYSIS]</scope>
</reference>
<reference key="30">
    <citation type="journal article" date="2017" name="Nat. Struct. Mol. Biol.">
        <title>Site-specific mapping of the human SUMO proteome reveals co-modification with phosphorylation.</title>
        <authorList>
            <person name="Hendriks I.A."/>
            <person name="Lyon D."/>
            <person name="Young C."/>
            <person name="Jensen L.J."/>
            <person name="Vertegaal A.C."/>
            <person name="Nielsen M.L."/>
        </authorList>
    </citation>
    <scope>SUMOYLATION [LARGE SCALE ANALYSIS] AT LYS-65 AND LYS-218</scope>
    <scope>IDENTIFICATION BY MASS SPECTROMETRY [LARGE SCALE ANALYSIS]</scope>
</reference>
<reference key="31">
    <citation type="journal article" date="2018" name="Proc. Natl. Acad. Sci. U.S.A.">
        <title>Structural-functional interactions of NS1-BP protein with the splicing and mRNA export machineries for viral and host gene expression.</title>
        <authorList>
            <person name="Zhang K."/>
            <person name="Shang G."/>
            <person name="Padavannil A."/>
            <person name="Wang J."/>
            <person name="Sakthivel R."/>
            <person name="Chen X."/>
            <person name="Kim M."/>
            <person name="Thompson M.G."/>
            <person name="Garcia-Sastre A."/>
            <person name="Lynch K.W."/>
            <person name="Chen Z.J."/>
            <person name="Chook Y.M."/>
            <person name="Fontoura B.M.A."/>
        </authorList>
    </citation>
    <scope>INTERACTION WITH IVNS1ABP</scope>
</reference>
<reference key="32">
    <citation type="journal article" date="2000" name="EMBO J.">
        <title>Structure of tandem RNA recognition motifs from polypyrimidine tract binding protein reveals novel features of the RRM fold.</title>
        <authorList>
            <person name="Conte M.R."/>
            <person name="Gruene T."/>
            <person name="Ghuman J."/>
            <person name="Kelly G."/>
            <person name="Ladas A."/>
            <person name="Matthews S."/>
            <person name="Curry S."/>
        </authorList>
    </citation>
    <scope>STRUCTURE BY NMR OF 361-557</scope>
    <scope>RNA-BINDING</scope>
</reference>
<reference key="33">
    <citation type="journal article" date="2004" name="Structure">
        <title>Structure and RNA interactions of the N-terminal RRM domains of PTB.</title>
        <authorList>
            <person name="Simpson P.J."/>
            <person name="Monie T.P."/>
            <person name="Szendroei A."/>
            <person name="Davydova N."/>
            <person name="Tyzack J.K."/>
            <person name="Conte M.R."/>
            <person name="Read C.M."/>
            <person name="Cary P.D."/>
            <person name="Svergun D.I."/>
            <person name="Konarev P.V."/>
            <person name="Curry S."/>
            <person name="Matthews S."/>
        </authorList>
    </citation>
    <scope>STRUCTURE BY NMR OF 55-327</scope>
    <scope>SUBUNIT</scope>
    <scope>RNA-BINDING</scope>
</reference>
<reference key="34">
    <citation type="journal article" date="2005" name="Science">
        <title>Structure of PTB bound to RNA: specific binding and implications for splicing regulation.</title>
        <authorList>
            <person name="Oberstrass F.C."/>
            <person name="Auweter S.D."/>
            <person name="Erat M."/>
            <person name="Hargous Y."/>
            <person name="Henning A."/>
            <person name="Wenter P."/>
            <person name="Reymond L."/>
            <person name="Amir-Ahmady B."/>
            <person name="Pitsch S."/>
            <person name="Black D.L."/>
            <person name="Allain F.H."/>
        </authorList>
    </citation>
    <scope>STRUCTURE BY NMR OF 49-557 IN COMPLEXES WITH RNA</scope>
    <scope>FUNCTION</scope>
</reference>
<reference key="35">
    <citation type="journal article" date="2006" name="EMBO J.">
        <title>Structure of the two most C-terminal RNA recognition motifs of PTB using segmental isotope labeling.</title>
        <authorList>
            <person name="Vitali F."/>
            <person name="Henning A."/>
            <person name="Oberstrass F.C."/>
            <person name="Hargous Y."/>
            <person name="Auweter S.D."/>
            <person name="Erat M."/>
            <person name="Allain F.H."/>
        </authorList>
    </citation>
    <scope>STRUCTURE BY NMR OF 350-557</scope>
</reference>
<protein>
    <recommendedName>
        <fullName>Polypyrimidine tract-binding protein 1</fullName>
        <shortName>PTB</shortName>
    </recommendedName>
    <alternativeName>
        <fullName>57 kDa RNA-binding protein PPTB-1</fullName>
    </alternativeName>
    <alternativeName>
        <fullName>Heterogeneous nuclear ribonucleoprotein I</fullName>
        <shortName>hnRNP I</shortName>
    </alternativeName>
</protein>
<evidence type="ECO:0000255" key="1">
    <source>
        <dbReference type="PROSITE-ProRule" id="PRU00176"/>
    </source>
</evidence>
<evidence type="ECO:0000269" key="2">
    <source>
    </source>
</evidence>
<evidence type="ECO:0000269" key="3">
    <source>
    </source>
</evidence>
<evidence type="ECO:0000269" key="4">
    <source>
    </source>
</evidence>
<evidence type="ECO:0000269" key="5">
    <source>
    </source>
</evidence>
<evidence type="ECO:0000269" key="6">
    <source>
    </source>
</evidence>
<evidence type="ECO:0000269" key="7">
    <source>
    </source>
</evidence>
<evidence type="ECO:0000269" key="8">
    <source>
    </source>
</evidence>
<evidence type="ECO:0000269" key="9">
    <source>
    </source>
</evidence>
<evidence type="ECO:0000269" key="10">
    <source>
    </source>
</evidence>
<evidence type="ECO:0000269" key="11">
    <source>
    </source>
</evidence>
<evidence type="ECO:0000269" key="12">
    <source>
    </source>
</evidence>
<evidence type="ECO:0000269" key="13">
    <source ref="8"/>
</evidence>
<evidence type="ECO:0007744" key="14">
    <source>
    </source>
</evidence>
<evidence type="ECO:0007744" key="15">
    <source>
    </source>
</evidence>
<evidence type="ECO:0007744" key="16">
    <source>
    </source>
</evidence>
<evidence type="ECO:0007744" key="17">
    <source>
    </source>
</evidence>
<evidence type="ECO:0007744" key="18">
    <source>
    </source>
</evidence>
<evidence type="ECO:0007744" key="19">
    <source>
    </source>
</evidence>
<evidence type="ECO:0007744" key="20">
    <source>
    </source>
</evidence>
<evidence type="ECO:0007744" key="21">
    <source>
    </source>
</evidence>
<evidence type="ECO:0007744" key="22">
    <source>
    </source>
</evidence>
<evidence type="ECO:0007829" key="23">
    <source>
        <dbReference type="PDB" id="1QM9"/>
    </source>
</evidence>
<evidence type="ECO:0007829" key="24">
    <source>
        <dbReference type="PDB" id="1SJQ"/>
    </source>
</evidence>
<evidence type="ECO:0007829" key="25">
    <source>
        <dbReference type="PDB" id="1SJR"/>
    </source>
</evidence>
<evidence type="ECO:0007829" key="26">
    <source>
        <dbReference type="PDB" id="2AD9"/>
    </source>
</evidence>
<evidence type="ECO:0007829" key="27">
    <source>
        <dbReference type="PDB" id="2ADB"/>
    </source>
</evidence>
<evidence type="ECO:0007829" key="28">
    <source>
        <dbReference type="PDB" id="2ADC"/>
    </source>
</evidence>
<evidence type="ECO:0007829" key="29">
    <source>
        <dbReference type="PDB" id="2EVZ"/>
    </source>
</evidence>
<evidence type="ECO:0007829" key="30">
    <source>
        <dbReference type="PDB" id="2N3O"/>
    </source>
</evidence>
<evidence type="ECO:0007829" key="31">
    <source>
        <dbReference type="PDB" id="3ZZY"/>
    </source>
</evidence>
<evidence type="ECO:0007829" key="32">
    <source>
        <dbReference type="PDB" id="3ZZZ"/>
    </source>
</evidence>
<evidence type="ECO:0007829" key="33">
    <source>
        <dbReference type="PDB" id="8BGF"/>
    </source>
</evidence>
<evidence type="ECO:0007829" key="34">
    <source>
        <dbReference type="PDB" id="8BWF"/>
    </source>
</evidence>
<proteinExistence type="evidence at protein level"/>